<proteinExistence type="evidence at protein level"/>
<reference key="1">
    <citation type="journal article" date="1994" name="Cell">
        <title>Fusion of PDGF receptor beta to a novel ets-like gene, tel, in chronic myelomonocytic leukemia with t(5;12) chromosomal translocation.</title>
        <authorList>
            <person name="Golub T.R."/>
            <person name="Barker G.F."/>
            <person name="Lovett M."/>
            <person name="Gilliland D.G."/>
        </authorList>
    </citation>
    <scope>NUCLEOTIDE SEQUENCE [MRNA]</scope>
    <scope>CHROMOSOMAL TRANSLOCATION WITH PDGFRB</scope>
</reference>
<reference key="2">
    <citation type="journal article" date="2004" name="Nat. Genet.">
        <title>Complete sequencing and characterization of 21,243 full-length human cDNAs.</title>
        <authorList>
            <person name="Ota T."/>
            <person name="Suzuki Y."/>
            <person name="Nishikawa T."/>
            <person name="Otsuki T."/>
            <person name="Sugiyama T."/>
            <person name="Irie R."/>
            <person name="Wakamatsu A."/>
            <person name="Hayashi K."/>
            <person name="Sato H."/>
            <person name="Nagai K."/>
            <person name="Kimura K."/>
            <person name="Makita H."/>
            <person name="Sekine M."/>
            <person name="Obayashi M."/>
            <person name="Nishi T."/>
            <person name="Shibahara T."/>
            <person name="Tanaka T."/>
            <person name="Ishii S."/>
            <person name="Yamamoto J."/>
            <person name="Saito K."/>
            <person name="Kawai Y."/>
            <person name="Isono Y."/>
            <person name="Nakamura Y."/>
            <person name="Nagahari K."/>
            <person name="Murakami K."/>
            <person name="Yasuda T."/>
            <person name="Iwayanagi T."/>
            <person name="Wagatsuma M."/>
            <person name="Shiratori A."/>
            <person name="Sudo H."/>
            <person name="Hosoiri T."/>
            <person name="Kaku Y."/>
            <person name="Kodaira H."/>
            <person name="Kondo H."/>
            <person name="Sugawara M."/>
            <person name="Takahashi M."/>
            <person name="Kanda K."/>
            <person name="Yokoi T."/>
            <person name="Furuya T."/>
            <person name="Kikkawa E."/>
            <person name="Omura Y."/>
            <person name="Abe K."/>
            <person name="Kamihara K."/>
            <person name="Katsuta N."/>
            <person name="Sato K."/>
            <person name="Tanikawa M."/>
            <person name="Yamazaki M."/>
            <person name="Ninomiya K."/>
            <person name="Ishibashi T."/>
            <person name="Yamashita H."/>
            <person name="Murakawa K."/>
            <person name="Fujimori K."/>
            <person name="Tanai H."/>
            <person name="Kimata M."/>
            <person name="Watanabe M."/>
            <person name="Hiraoka S."/>
            <person name="Chiba Y."/>
            <person name="Ishida S."/>
            <person name="Ono Y."/>
            <person name="Takiguchi S."/>
            <person name="Watanabe S."/>
            <person name="Yosida M."/>
            <person name="Hotuta T."/>
            <person name="Kusano J."/>
            <person name="Kanehori K."/>
            <person name="Takahashi-Fujii A."/>
            <person name="Hara H."/>
            <person name="Tanase T.-O."/>
            <person name="Nomura Y."/>
            <person name="Togiya S."/>
            <person name="Komai F."/>
            <person name="Hara R."/>
            <person name="Takeuchi K."/>
            <person name="Arita M."/>
            <person name="Imose N."/>
            <person name="Musashino K."/>
            <person name="Yuuki H."/>
            <person name="Oshima A."/>
            <person name="Sasaki N."/>
            <person name="Aotsuka S."/>
            <person name="Yoshikawa Y."/>
            <person name="Matsunawa H."/>
            <person name="Ichihara T."/>
            <person name="Shiohata N."/>
            <person name="Sano S."/>
            <person name="Moriya S."/>
            <person name="Momiyama H."/>
            <person name="Satoh N."/>
            <person name="Takami S."/>
            <person name="Terashima Y."/>
            <person name="Suzuki O."/>
            <person name="Nakagawa S."/>
            <person name="Senoh A."/>
            <person name="Mizoguchi H."/>
            <person name="Goto Y."/>
            <person name="Shimizu F."/>
            <person name="Wakebe H."/>
            <person name="Hishigaki H."/>
            <person name="Watanabe T."/>
            <person name="Sugiyama A."/>
            <person name="Takemoto M."/>
            <person name="Kawakami B."/>
            <person name="Yamazaki M."/>
            <person name="Watanabe K."/>
            <person name="Kumagai A."/>
            <person name="Itakura S."/>
            <person name="Fukuzumi Y."/>
            <person name="Fujimori Y."/>
            <person name="Komiyama M."/>
            <person name="Tashiro H."/>
            <person name="Tanigami A."/>
            <person name="Fujiwara T."/>
            <person name="Ono T."/>
            <person name="Yamada K."/>
            <person name="Fujii Y."/>
            <person name="Ozaki K."/>
            <person name="Hirao M."/>
            <person name="Ohmori Y."/>
            <person name="Kawabata A."/>
            <person name="Hikiji T."/>
            <person name="Kobatake N."/>
            <person name="Inagaki H."/>
            <person name="Ikema Y."/>
            <person name="Okamoto S."/>
            <person name="Okitani R."/>
            <person name="Kawakami T."/>
            <person name="Noguchi S."/>
            <person name="Itoh T."/>
            <person name="Shigeta K."/>
            <person name="Senba T."/>
            <person name="Matsumura K."/>
            <person name="Nakajima Y."/>
            <person name="Mizuno T."/>
            <person name="Morinaga M."/>
            <person name="Sasaki M."/>
            <person name="Togashi T."/>
            <person name="Oyama M."/>
            <person name="Hata H."/>
            <person name="Watanabe M."/>
            <person name="Komatsu T."/>
            <person name="Mizushima-Sugano J."/>
            <person name="Satoh T."/>
            <person name="Shirai Y."/>
            <person name="Takahashi Y."/>
            <person name="Nakagawa K."/>
            <person name="Okumura K."/>
            <person name="Nagase T."/>
            <person name="Nomura N."/>
            <person name="Kikuchi H."/>
            <person name="Masuho Y."/>
            <person name="Yamashita R."/>
            <person name="Nakai K."/>
            <person name="Yada T."/>
            <person name="Nakamura Y."/>
            <person name="Ohara O."/>
            <person name="Isogai T."/>
            <person name="Sugano S."/>
        </authorList>
    </citation>
    <scope>NUCLEOTIDE SEQUENCE [LARGE SCALE MRNA]</scope>
    <source>
        <tissue>Urinary bladder</tissue>
    </source>
</reference>
<reference key="3">
    <citation type="submission" date="2005-07" db="EMBL/GenBank/DDBJ databases">
        <authorList>
            <person name="Mural R.J."/>
            <person name="Istrail S."/>
            <person name="Sutton G.G."/>
            <person name="Florea L."/>
            <person name="Halpern A.L."/>
            <person name="Mobarry C.M."/>
            <person name="Lippert R."/>
            <person name="Walenz B."/>
            <person name="Shatkay H."/>
            <person name="Dew I."/>
            <person name="Miller J.R."/>
            <person name="Flanigan M.J."/>
            <person name="Edwards N.J."/>
            <person name="Bolanos R."/>
            <person name="Fasulo D."/>
            <person name="Halldorsson B.V."/>
            <person name="Hannenhalli S."/>
            <person name="Turner R."/>
            <person name="Yooseph S."/>
            <person name="Lu F."/>
            <person name="Nusskern D.R."/>
            <person name="Shue B.C."/>
            <person name="Zheng X.H."/>
            <person name="Zhong F."/>
            <person name="Delcher A.L."/>
            <person name="Huson D.H."/>
            <person name="Kravitz S.A."/>
            <person name="Mouchard L."/>
            <person name="Reinert K."/>
            <person name="Remington K.A."/>
            <person name="Clark A.G."/>
            <person name="Waterman M.S."/>
            <person name="Eichler E.E."/>
            <person name="Adams M.D."/>
            <person name="Hunkapiller M.W."/>
            <person name="Myers E.W."/>
            <person name="Venter J.C."/>
        </authorList>
    </citation>
    <scope>NUCLEOTIDE SEQUENCE [LARGE SCALE GENOMIC DNA]</scope>
</reference>
<reference key="4">
    <citation type="journal article" date="2004" name="Genome Res.">
        <title>The status, quality, and expansion of the NIH full-length cDNA project: the Mammalian Gene Collection (MGC).</title>
        <authorList>
            <consortium name="The MGC Project Team"/>
        </authorList>
    </citation>
    <scope>NUCLEOTIDE SEQUENCE [LARGE SCALE MRNA]</scope>
    <source>
        <tissue>Testis</tissue>
    </source>
</reference>
<reference key="5">
    <citation type="journal article" date="1996" name="Genome Res.">
        <title>Genomic organization of TEL: the human ETS-variant gene 6.</title>
        <authorList>
            <person name="Baens M."/>
            <person name="Peeters P."/>
            <person name="Guo C."/>
            <person name="Aerssens J."/>
            <person name="Marynen P."/>
        </authorList>
    </citation>
    <scope>NUCLEOTIDE SEQUENCE [GENOMIC DNA] OF 56-109; 111-336 AND 338-452</scope>
</reference>
<reference key="6">
    <citation type="journal article" date="2007" name="Nature">
        <title>Genome-wide analysis of genetic alterations in acute lymphoblastic leukaemia.</title>
        <authorList>
            <person name="Mullighan C.G."/>
            <person name="Goorha S."/>
            <person name="Radtke I."/>
            <person name="Miller C.B."/>
            <person name="Coustan-Smith E."/>
            <person name="Dalton J.D."/>
            <person name="Girtman K."/>
            <person name="Mathew S."/>
            <person name="Ma J."/>
            <person name="Pounds S.B."/>
            <person name="Su X."/>
            <person name="Pui C.-H."/>
            <person name="Relling M.V."/>
            <person name="Evans W.E."/>
            <person name="Shurtleff S.A."/>
            <person name="Downing J.R."/>
        </authorList>
    </citation>
    <scope>NUCLEOTIDE SEQUENCE [MRNA] OF 56-452</scope>
    <scope>CHROMOSOMAL TRANSLOCATION WITH PAX5</scope>
</reference>
<reference key="7">
    <citation type="journal article" date="1995" name="Oncogene">
        <title>Translocation (12;22) (p13;q11) in myeloproliferative disorders results in fusion of the ETS-like TEL gene on 12p13 to the MN1 gene on 22q11.</title>
        <authorList>
            <person name="Buijs A."/>
            <person name="Sherr S."/>
            <person name="van Baal S."/>
            <person name="van Bezouw S."/>
            <person name="van der Plas D."/>
            <person name="Geurts van Kessel A."/>
            <person name="Riegman P."/>
            <person name="Lekanne Deprez R."/>
            <person name="Zwarthoff E."/>
            <person name="Hagemeijer A."/>
        </authorList>
    </citation>
    <scope>CHROMOSOMAL TRANSLOCATION WITH MN1</scope>
</reference>
<reference key="8">
    <citation type="journal article" date="1995" name="Proc. Natl. Acad. Sci. U.S.A.">
        <title>Fusion of the TEL gene on 12p13 to the AML1 gene on 21q22 in acute lymphoblastic leukemia.</title>
        <authorList>
            <person name="Golub T.R."/>
            <person name="Barker G.F."/>
            <person name="Bohlander S.K."/>
            <person name="Hiebert S.W."/>
            <person name="Ward D.C."/>
            <person name="Bray-Ward P."/>
            <person name="Morgan E."/>
            <person name="Raimondi S.C."/>
            <person name="Rowley J.D."/>
            <person name="Gilliland D.G."/>
        </authorList>
    </citation>
    <scope>CHROMOSOMAL TRANSLOCATION WITH AML1</scope>
</reference>
<reference key="9">
    <citation type="journal article" date="1995" name="Blood">
        <title>The t(12;21) of acute lymphoblastic leukemia results in a tel-AML1 gene fusion.</title>
        <authorList>
            <person name="Romana S.P."/>
            <person name="Mauchauffe M."/>
            <person name="le Coniat M."/>
            <person name="Chumakov I."/>
            <person name="le Paslier D."/>
            <person name="Berger R."/>
            <person name="Bernard O.A."/>
        </authorList>
    </citation>
    <scope>CHROMOSOMAL TRANSLOCATION WITH AML1</scope>
</reference>
<reference key="10">
    <citation type="journal article" date="1997" name="Blood">
        <title>Fusion of TEL, the ETS-variant gene 6 (ETV6), to the receptor-associated kinase JAK2 as a result of t(9;12) in a lymphoid and t(9;15;12) in a myeloid leukemia.</title>
        <authorList>
            <person name="Peeters P."/>
            <person name="Raynaud S.D."/>
            <person name="Cools J."/>
            <person name="Wlodarska I."/>
            <person name="Grosgeorge J."/>
            <person name="Philip P."/>
            <person name="Monpoux F."/>
            <person name="Van Rompaey L."/>
            <person name="Baens M."/>
            <person name="Van Den Berghe H."/>
            <person name="Marynen P."/>
        </authorList>
    </citation>
    <scope>CHROMOSOMAL TRANSLOCATIONS WITH JAK2</scope>
</reference>
<reference key="11">
    <citation type="journal article" date="1999" name="Genes Chromosomes Cancer">
        <title>Fusion of TEL/ETV6 to a novel ACS2 in myelodysplastic syndrome and acute myelogenous leukemia with t(5;12)(q31;p13).</title>
        <authorList>
            <person name="Yagasaki F."/>
            <person name="Jinnai I."/>
            <person name="Yoshida S."/>
            <person name="Yokoyama Y."/>
            <person name="Matsuda A."/>
            <person name="Kusumoto S."/>
            <person name="Kobayashi H."/>
            <person name="Terasaki H."/>
            <person name="Ohyashiki K."/>
            <person name="Asou N."/>
            <person name="Murohashi I."/>
            <person name="Bessho M."/>
            <person name="Hirashima K."/>
        </authorList>
    </citation>
    <scope>CHROMOSOMAL TRANSLOCATION WITH ACSL6</scope>
</reference>
<reference key="12">
    <citation type="journal article" date="1999" name="Blood">
        <title>Fusion of a novel gene, BTL, to ETV6 in acute myeloid leukemias with a t(4;12)(q11-q12;p13).</title>
        <authorList>
            <person name="Cools J."/>
            <person name="Bilhou-Nabera C."/>
            <person name="Wlodarska I."/>
            <person name="Cabrol C."/>
            <person name="Talmant P."/>
            <person name="Bernard P."/>
            <person name="Hagemeijer A."/>
            <person name="Marynen P."/>
        </authorList>
    </citation>
    <scope>CHROMOSOMAL TRANSLOCATION WITH CHIC2</scope>
</reference>
<reference key="13">
    <citation type="journal article" date="2002" name="Biochem. Biophys. Res. Commun.">
        <title>Functional regulation of TEL by p38-induced phosphorylation.</title>
        <authorList>
            <person name="Arai H."/>
            <person name="Maki K."/>
            <person name="Waga K."/>
            <person name="Sasaki K."/>
            <person name="Nakamura Y."/>
            <person name="Imai Y."/>
            <person name="Kurokawa M."/>
            <person name="Hirai H."/>
            <person name="Mitani K."/>
        </authorList>
    </citation>
    <scope>PHOSPHORYLATION AT SER-22 AND SER-257</scope>
    <scope>MUTAGENESIS OF SER-213; SER-238 AND SER-257</scope>
</reference>
<reference key="14">
    <citation type="journal article" date="2002" name="Genes Chromosomes Cancer">
        <title>A novel gene, MDS2, is fused to ETV6/TEL in a t(1;12)(p36.1;p13) in a patient with myelodysplastic syndrome.</title>
        <authorList>
            <person name="Odero M.D."/>
            <person name="Vizmanos J.L."/>
            <person name="Roman J.P."/>
            <person name="Lahortiga I."/>
            <person name="Panizo C."/>
            <person name="Calasanz M.J."/>
            <person name="Zeleznik-Le N.J."/>
            <person name="Rowley J.D."/>
            <person name="Novo F.J."/>
        </authorList>
    </citation>
    <scope>CHROMOSOMAL TRANSLOCATION WITH MDS2</scope>
</reference>
<reference key="15">
    <citation type="journal article" date="2002" name="N. Engl. J. Med.">
        <title>Response to imatinib mesylate in patients with chronic myeloproliferative diseases with rearrangements of the platelet-derived growth factor receptor beta.</title>
        <authorList>
            <person name="Apperley J.F."/>
            <person name="Gardembas M."/>
            <person name="Melo J.V."/>
            <person name="Russell-Jones R."/>
            <person name="Bain B.J."/>
            <person name="Baxter E.J."/>
            <person name="Chase A."/>
            <person name="Chessells J.M."/>
            <person name="Colombat M."/>
            <person name="Dearden C.E."/>
            <person name="Dimitrijevic S."/>
            <person name="Mahon F.-X."/>
            <person name="Marin D."/>
            <person name="Nikolova Z."/>
            <person name="Olavarria E."/>
            <person name="Silberman S."/>
            <person name="Schultheis B."/>
            <person name="Cross N.C.P."/>
            <person name="Goldman J.M."/>
        </authorList>
    </citation>
    <scope>INVOLVEMENT IN MPE</scope>
    <scope>CHROMOSOMAL TRANSLOCATION WITH PDGFRB</scope>
</reference>
<reference key="16">
    <citation type="journal article" date="2003" name="J. Biol. Chem.">
        <title>The human L(3)MBT Polycomb group protein is a transcriptional repressor and interacts physically and functionally with TEL (ETV6).</title>
        <authorList>
            <person name="Boccuni P."/>
            <person name="MacGrogan D."/>
            <person name="Scandura J.M."/>
            <person name="Nimer S.D."/>
        </authorList>
    </citation>
    <scope>INTERACTION WITH L3MBTL1</scope>
</reference>
<reference key="17">
    <citation type="journal article" date="2003" name="J. Biol. Chem.">
        <title>The histone deacetylase 9 gene encodes multiple protein isoforms.</title>
        <authorList>
            <person name="Petrie K."/>
            <person name="Guidez F."/>
            <person name="Howell L."/>
            <person name="Healy L."/>
            <person name="Waxman S."/>
            <person name="Greaves M."/>
            <person name="Zelent A."/>
        </authorList>
    </citation>
    <scope>INTERACTION WITH HDAC9</scope>
</reference>
<reference key="18">
    <citation type="journal article" date="2005" name="Oncogene">
        <title>Somatic heterozygous mutations in ETV6 (TEL) and frequent absence of ETV6 protein in acute myeloid leukemia.</title>
        <authorList>
            <person name="Barjesteh van Waalwijk van Doorn-Khosrovani S."/>
            <person name="Spensberger D."/>
            <person name="de Knegt Y."/>
            <person name="Tang M."/>
            <person name="Loewenberg B."/>
            <person name="Delwel R."/>
        </authorList>
    </citation>
    <scope>INVOLVEMENT IN AML</scope>
    <scope>VARIANT GLY-344 INS</scope>
    <scope>CHARACTERIZATION OF VARIANT GLY-344 INS</scope>
</reference>
<reference key="19">
    <citation type="journal article" date="2008" name="Proc. Natl. Acad. Sci. U.S.A.">
        <title>A quantitative atlas of mitotic phosphorylation.</title>
        <authorList>
            <person name="Dephoure N."/>
            <person name="Zhou C."/>
            <person name="Villen J."/>
            <person name="Beausoleil S.A."/>
            <person name="Bakalarski C.E."/>
            <person name="Elledge S.J."/>
            <person name="Gygi S.P."/>
        </authorList>
    </citation>
    <scope>PHOSPHORYLATION [LARGE SCALE ANALYSIS] AT SER-22</scope>
    <scope>IDENTIFICATION BY MASS SPECTROMETRY [LARGE SCALE ANALYSIS]</scope>
    <source>
        <tissue>Cervix carcinoma</tissue>
    </source>
</reference>
<reference key="20">
    <citation type="journal article" date="2009" name="Sci. Signal.">
        <title>Quantitative phosphoproteomic analysis of T cell receptor signaling reveals system-wide modulation of protein-protein interactions.</title>
        <authorList>
            <person name="Mayya V."/>
            <person name="Lundgren D.H."/>
            <person name="Hwang S.-I."/>
            <person name="Rezaul K."/>
            <person name="Wu L."/>
            <person name="Eng J.K."/>
            <person name="Rodionov V."/>
            <person name="Han D.K."/>
        </authorList>
    </citation>
    <scope>PHOSPHORYLATION [LARGE SCALE ANALYSIS] AT THR-18 AND SER-22</scope>
    <scope>IDENTIFICATION BY MASS SPECTROMETRY [LARGE SCALE ANALYSIS]</scope>
    <source>
        <tissue>Leukemic T-cell</tissue>
    </source>
</reference>
<reference key="21">
    <citation type="journal article" date="2009" name="Science">
        <title>Lysine acetylation targets protein complexes and co-regulates major cellular functions.</title>
        <authorList>
            <person name="Choudhary C."/>
            <person name="Kumar C."/>
            <person name="Gnad F."/>
            <person name="Nielsen M.L."/>
            <person name="Rehman M."/>
            <person name="Walther T.C."/>
            <person name="Olsen J.V."/>
            <person name="Mann M."/>
        </authorList>
    </citation>
    <scope>ACETYLATION [LARGE SCALE ANALYSIS] AT LYS-11 AND LYS-302</scope>
    <scope>IDENTIFICATION BY MASS SPECTROMETRY [LARGE SCALE ANALYSIS]</scope>
</reference>
<reference key="22">
    <citation type="journal article" date="2010" name="Sci. Signal.">
        <title>Quantitative phosphoproteomics reveals widespread full phosphorylation site occupancy during mitosis.</title>
        <authorList>
            <person name="Olsen J.V."/>
            <person name="Vermeulen M."/>
            <person name="Santamaria A."/>
            <person name="Kumar C."/>
            <person name="Miller M.L."/>
            <person name="Jensen L.J."/>
            <person name="Gnad F."/>
            <person name="Cox J."/>
            <person name="Jensen T.S."/>
            <person name="Nigg E.A."/>
            <person name="Brunak S."/>
            <person name="Mann M."/>
        </authorList>
    </citation>
    <scope>PHOSPHORYLATION [LARGE SCALE ANALYSIS] AT SER-22</scope>
    <scope>IDENTIFICATION BY MASS SPECTROMETRY [LARGE SCALE ANALYSIS]</scope>
    <source>
        <tissue>Cervix carcinoma</tissue>
    </source>
</reference>
<reference key="23">
    <citation type="journal article" date="2011" name="Sci. Signal.">
        <title>System-wide temporal characterization of the proteome and phosphoproteome of human embryonic stem cell differentiation.</title>
        <authorList>
            <person name="Rigbolt K.T."/>
            <person name="Prokhorova T.A."/>
            <person name="Akimov V."/>
            <person name="Henningsen J."/>
            <person name="Johansen P.T."/>
            <person name="Kratchmarova I."/>
            <person name="Kassem M."/>
            <person name="Mann M."/>
            <person name="Olsen J.V."/>
            <person name="Blagoev B."/>
        </authorList>
    </citation>
    <scope>PHOSPHORYLATION [LARGE SCALE ANALYSIS] AT SER-22 AND SER-213</scope>
    <scope>IDENTIFICATION BY MASS SPECTROMETRY [LARGE SCALE ANALYSIS]</scope>
</reference>
<reference key="24">
    <citation type="journal article" date="2012" name="Proc. Natl. Acad. Sci. U.S.A.">
        <title>N-terminal acetylome analyses and functional insights of the N-terminal acetyltransferase NatB.</title>
        <authorList>
            <person name="Van Damme P."/>
            <person name="Lasa M."/>
            <person name="Polevoda B."/>
            <person name="Gazquez C."/>
            <person name="Elosegui-Artola A."/>
            <person name="Kim D.S."/>
            <person name="De Juan-Pardo E."/>
            <person name="Demeyer K."/>
            <person name="Hole K."/>
            <person name="Larrea E."/>
            <person name="Timmerman E."/>
            <person name="Prieto J."/>
            <person name="Arnesen T."/>
            <person name="Sherman F."/>
            <person name="Gevaert K."/>
            <person name="Aldabe R."/>
        </authorList>
    </citation>
    <scope>IDENTIFICATION BY MASS SPECTROMETRY [LARGE SCALE ANALYSIS]</scope>
</reference>
<reference key="25">
    <citation type="journal article" date="2013" name="J. Proteome Res.">
        <title>Toward a comprehensive characterization of a human cancer cell phosphoproteome.</title>
        <authorList>
            <person name="Zhou H."/>
            <person name="Di Palma S."/>
            <person name="Preisinger C."/>
            <person name="Peng M."/>
            <person name="Polat A.N."/>
            <person name="Heck A.J."/>
            <person name="Mohammed S."/>
        </authorList>
    </citation>
    <scope>IDENTIFICATION BY MASS SPECTROMETRY [LARGE SCALE ANALYSIS]</scope>
    <source>
        <tissue>Erythroleukemia</tissue>
    </source>
</reference>
<reference key="26">
    <citation type="journal article" date="2014" name="Nat. Struct. Mol. Biol.">
        <title>Uncovering global SUMOylation signaling networks in a site-specific manner.</title>
        <authorList>
            <person name="Hendriks I.A."/>
            <person name="D'Souza R.C."/>
            <person name="Yang B."/>
            <person name="Verlaan-de Vries M."/>
            <person name="Mann M."/>
            <person name="Vertegaal A.C."/>
        </authorList>
    </citation>
    <scope>SUMOYLATION [LARGE SCALE ANALYSIS] AT LYS-11</scope>
    <scope>IDENTIFICATION BY MASS SPECTROMETRY [LARGE SCALE ANALYSIS]</scope>
</reference>
<reference key="27">
    <citation type="journal article" date="2015" name="Cell Rep.">
        <title>SUMO-2 orchestrates chromatin modifiers in response to DNA damage.</title>
        <authorList>
            <person name="Hendriks I.A."/>
            <person name="Treffers L.W."/>
            <person name="Verlaan-de Vries M."/>
            <person name="Olsen J.V."/>
            <person name="Vertegaal A.C."/>
        </authorList>
    </citation>
    <scope>SUMOYLATION [LARGE SCALE ANALYSIS] AT LYS-11</scope>
    <scope>IDENTIFICATION BY MASS SPECTROMETRY [LARGE SCALE ANALYSIS]</scope>
</reference>
<reference key="28">
    <citation type="journal article" date="2015" name="Mol. Cell. Proteomics">
        <title>System-wide analysis of SUMOylation dynamics in response to replication stress reveals novel small ubiquitin-like modified target proteins and acceptor lysines relevant for genome stability.</title>
        <authorList>
            <person name="Xiao Z."/>
            <person name="Chang J.G."/>
            <person name="Hendriks I.A."/>
            <person name="Sigurdsson J.O."/>
            <person name="Olsen J.V."/>
            <person name="Vertegaal A.C."/>
        </authorList>
    </citation>
    <scope>SUMOYLATION [LARGE SCALE ANALYSIS] AT LYS-11 AND LYS-288</scope>
    <scope>IDENTIFICATION BY MASS SPECTROMETRY [LARGE SCALE ANALYSIS]</scope>
</reference>
<reference key="29">
    <citation type="journal article" date="2015" name="Nat. Genet.">
        <title>Germline ETV6 mutations in familial thrombocytopenia and hematologic malignancy.</title>
        <authorList>
            <person name="Zhang M.Y."/>
            <person name="Churpek J.E."/>
            <person name="Keel S.B."/>
            <person name="Walsh T."/>
            <person name="Lee M.K."/>
            <person name="Loeb K.R."/>
            <person name="Gulsuner S."/>
            <person name="Pritchard C.C."/>
            <person name="Sanchez-Bonilla M."/>
            <person name="Delrow J.J."/>
            <person name="Basom R.S."/>
            <person name="Forouhar M."/>
            <person name="Gyurkocza B."/>
            <person name="Schwartz B.S."/>
            <person name="Neistadt B."/>
            <person name="Marquez R."/>
            <person name="Mariani C.J."/>
            <person name="Coats S.A."/>
            <person name="Hofmann I."/>
            <person name="Lindsley R.C."/>
            <person name="Williams D.A."/>
            <person name="Abkowitz J.L."/>
            <person name="Horwitz M.S."/>
            <person name="King M.C."/>
            <person name="Godley L.A."/>
            <person name="Shimamura A."/>
        </authorList>
    </citation>
    <scope>FUNCTION</scope>
    <scope>INVOLVEMENT IN THC5</scope>
    <scope>VARIANTS THC5 LEU-214; GLN-369 AND CYS-399</scope>
    <scope>CHARACTERIZATION OF VARIANTS THC5 LEU-214; GLN-369 AND CYS-399</scope>
</reference>
<reference key="30">
    <citation type="journal article" date="2017" name="Nat. Struct. Mol. Biol.">
        <title>Site-specific mapping of the human SUMO proteome reveals co-modification with phosphorylation.</title>
        <authorList>
            <person name="Hendriks I.A."/>
            <person name="Lyon D."/>
            <person name="Young C."/>
            <person name="Jensen L.J."/>
            <person name="Vertegaal A.C."/>
            <person name="Nielsen M.L."/>
        </authorList>
    </citation>
    <scope>SUMOYLATION [LARGE SCALE ANALYSIS] AT LYS-11; LYS-288; LYS-302; LYS-403 AND LYS-421</scope>
    <scope>IDENTIFICATION BY MASS SPECTROMETRY [LARGE SCALE ANALYSIS]</scope>
</reference>
<reference key="31">
    <citation type="submission" date="2006-12" db="PDB data bank">
        <title>Solution structure of ets domain transcriptional factor ETV6 protein.</title>
        <authorList>
            <consortium name="RIKEN structural genomics initiative (RSGI)"/>
        </authorList>
    </citation>
    <scope>STRUCTURE BY NMR OF 338-442</scope>
</reference>
<feature type="chain" id="PRO_0000204121" description="Transcription factor ETV6">
    <location>
        <begin position="1"/>
        <end position="452"/>
    </location>
</feature>
<feature type="domain" description="PNT" evidence="3">
    <location>
        <begin position="40"/>
        <end position="124"/>
    </location>
</feature>
<feature type="DNA-binding region" description="ETS" evidence="2">
    <location>
        <begin position="339"/>
        <end position="420"/>
    </location>
</feature>
<feature type="region of interest" description="Disordered" evidence="4">
    <location>
        <begin position="1"/>
        <end position="30"/>
    </location>
</feature>
<feature type="region of interest" description="Disordered" evidence="4">
    <location>
        <begin position="158"/>
        <end position="262"/>
    </location>
</feature>
<feature type="compositionally biased region" description="Polar residues" evidence="4">
    <location>
        <begin position="1"/>
        <end position="10"/>
    </location>
</feature>
<feature type="compositionally biased region" description="Polar residues" evidence="4">
    <location>
        <begin position="230"/>
        <end position="250"/>
    </location>
</feature>
<feature type="site" description="Breakpoint for translocation to form CHIC2-ETV6 in AML">
    <location>
        <begin position="11"/>
        <end position="12"/>
    </location>
</feature>
<feature type="site" description="Breakpoint for translocation to form ETV6-MDS2 in MDS">
    <location>
        <begin position="54"/>
        <end position="55"/>
    </location>
</feature>
<feature type="site" description="Breakpoint for translocation to form PAX5-ETV6">
    <location>
        <begin position="55"/>
        <end position="56"/>
    </location>
</feature>
<feature type="site" description="Breakpoint for translocation to form ETV6-AML1 in ALL">
    <location>
        <begin position="336"/>
        <end position="337"/>
    </location>
</feature>
<feature type="modified residue" description="N6-acetyllysine; alternate" evidence="21">
    <location>
        <position position="11"/>
    </location>
</feature>
<feature type="modified residue" description="Phosphothreonine" evidence="22">
    <location>
        <position position="18"/>
    </location>
</feature>
<feature type="modified residue" description="Phosphoserine" evidence="9 20 22 23 24">
    <location>
        <position position="22"/>
    </location>
</feature>
<feature type="modified residue" description="Phosphoserine" evidence="24">
    <location>
        <position position="213"/>
    </location>
</feature>
<feature type="modified residue" description="Phosphoserine" evidence="1">
    <location>
        <position position="238"/>
    </location>
</feature>
<feature type="modified residue" description="Phosphoserine; by MAPK14" evidence="9">
    <location>
        <position position="257"/>
    </location>
</feature>
<feature type="modified residue" description="N6-acetyllysine; alternate" evidence="21">
    <location>
        <position position="302"/>
    </location>
</feature>
<feature type="modified residue" description="Phosphoserine" evidence="1">
    <location>
        <position position="323"/>
    </location>
</feature>
<feature type="cross-link" description="Glycyl lysine isopeptide (Lys-Gly) (interchain with G-Cter in SUMO2); alternate" evidence="25 26 27 28">
    <location>
        <position position="11"/>
    </location>
</feature>
<feature type="cross-link" description="Glycyl lysine isopeptide (Lys-Gly) (interchain with G-Cter in SUMO2)" evidence="26 28">
    <location>
        <position position="288"/>
    </location>
</feature>
<feature type="cross-link" description="Glycyl lysine isopeptide (Lys-Gly) (interchain with G-Cter in SUMO2); alternate" evidence="28">
    <location>
        <position position="302"/>
    </location>
</feature>
<feature type="cross-link" description="Glycyl lysine isopeptide (Lys-Gly) (interchain with G-Cter in SUMO2)" evidence="28">
    <location>
        <position position="403"/>
    </location>
</feature>
<feature type="cross-link" description="Glycyl lysine isopeptide (Lys-Gly) (interchain with G-Cter in SUMO2)" evidence="28">
    <location>
        <position position="421"/>
    </location>
</feature>
<feature type="sequence variant" id="VAR_073322" description="In THC5; abrogates DNA binding; alters subcellular location; decreases transcriptional repression in a dominant-negative fashion; dbSNP:rs724159947." evidence="14">
    <original>P</original>
    <variation>L</variation>
    <location>
        <position position="214"/>
    </location>
</feature>
<feature type="sequence variant" id="VAR_034600" description="In one individual with AML; somatic mutation; unable to repress transcription." evidence="12">
    <original>Y</original>
    <variation>YG</variation>
    <location>
        <position position="344"/>
    </location>
</feature>
<feature type="sequence variant" id="VAR_073323" description="In THC5; abrogates DNA binding; alters subcellular location; decreases transcriptional repression in a dominant-negative fashion; dbSNP:rs724159946." evidence="14">
    <original>R</original>
    <variation>Q</variation>
    <location>
        <position position="369"/>
    </location>
</feature>
<feature type="sequence variant" id="VAR_073324" description="In THC5; abrogates DNA binding; alters subcellular location; decreases transcriptional repression in a dominant-negative fashion; dbSNP:rs724159945." evidence="14">
    <original>R</original>
    <variation>C</variation>
    <location>
        <position position="399"/>
    </location>
</feature>
<feature type="mutagenesis site" description="No effect.">
    <original>S</original>
    <variation>A</variation>
    <location>
        <position position="22"/>
    </location>
</feature>
<feature type="mutagenesis site" description="No effect." evidence="9">
    <original>S</original>
    <variation>A</variation>
    <location>
        <position position="213"/>
    </location>
</feature>
<feature type="mutagenesis site" description="No effect." evidence="9">
    <original>S</original>
    <variation>A</variation>
    <location>
        <position position="238"/>
    </location>
</feature>
<feature type="mutagenesis site" description="No phosphorylation by MAPK14." evidence="9">
    <original>S</original>
    <variation>A</variation>
    <location>
        <position position="257"/>
    </location>
</feature>
<feature type="helix" evidence="30">
    <location>
        <begin position="12"/>
        <end position="18"/>
    </location>
</feature>
<feature type="turn" evidence="30">
    <location>
        <begin position="20"/>
        <end position="22"/>
    </location>
</feature>
<feature type="helix" evidence="30">
    <location>
        <begin position="23"/>
        <end position="27"/>
    </location>
</feature>
<feature type="helix" evidence="30">
    <location>
        <begin position="30"/>
        <end position="38"/>
    </location>
</feature>
<feature type="helix" evidence="31">
    <location>
        <begin position="52"/>
        <end position="55"/>
    </location>
</feature>
<feature type="helix" evidence="31">
    <location>
        <begin position="58"/>
        <end position="60"/>
    </location>
</feature>
<feature type="helix" evidence="31">
    <location>
        <begin position="63"/>
        <end position="77"/>
    </location>
</feature>
<feature type="helix" evidence="31">
    <location>
        <begin position="84"/>
        <end position="87"/>
    </location>
</feature>
<feature type="helix" evidence="31">
    <location>
        <begin position="91"/>
        <end position="94"/>
    </location>
</feature>
<feature type="helix" evidence="31">
    <location>
        <begin position="99"/>
        <end position="105"/>
    </location>
</feature>
<feature type="turn" evidence="31">
    <location>
        <begin position="107"/>
        <end position="109"/>
    </location>
</feature>
<feature type="helix" evidence="31">
    <location>
        <begin position="110"/>
        <end position="122"/>
    </location>
</feature>
<feature type="helix" evidence="29">
    <location>
        <begin position="341"/>
        <end position="350"/>
    </location>
</feature>
<feature type="helix" evidence="29">
    <location>
        <begin position="352"/>
        <end position="354"/>
    </location>
</feature>
<feature type="turn" evidence="29">
    <location>
        <begin position="355"/>
        <end position="357"/>
    </location>
</feature>
<feature type="strand" evidence="29">
    <location>
        <begin position="358"/>
        <end position="362"/>
    </location>
</feature>
<feature type="helix" evidence="29">
    <location>
        <begin position="363"/>
        <end position="365"/>
    </location>
</feature>
<feature type="strand" evidence="29">
    <location>
        <begin position="367"/>
        <end position="371"/>
    </location>
</feature>
<feature type="helix" evidence="29">
    <location>
        <begin position="373"/>
        <end position="383"/>
    </location>
</feature>
<feature type="helix" evidence="29">
    <location>
        <begin position="391"/>
        <end position="403"/>
    </location>
</feature>
<feature type="strand" evidence="29">
    <location>
        <begin position="406"/>
        <end position="408"/>
    </location>
</feature>
<feature type="strand" evidence="29">
    <location>
        <begin position="411"/>
        <end position="419"/>
    </location>
</feature>
<feature type="helix" evidence="29">
    <location>
        <begin position="424"/>
        <end position="426"/>
    </location>
</feature>
<feature type="strand" evidence="29">
    <location>
        <begin position="430"/>
        <end position="432"/>
    </location>
</feature>
<feature type="helix" evidence="29">
    <location>
        <begin position="434"/>
        <end position="438"/>
    </location>
</feature>
<keyword id="KW-0002">3D-structure</keyword>
<keyword id="KW-0007">Acetylation</keyword>
<keyword id="KW-0160">Chromosomal rearrangement</keyword>
<keyword id="KW-0225">Disease variant</keyword>
<keyword id="KW-0238">DNA-binding</keyword>
<keyword id="KW-1017">Isopeptide bond</keyword>
<keyword id="KW-0539">Nucleus</keyword>
<keyword id="KW-0597">Phosphoprotein</keyword>
<keyword id="KW-1267">Proteomics identification</keyword>
<keyword id="KW-0656">Proto-oncogene</keyword>
<keyword id="KW-1185">Reference proteome</keyword>
<keyword id="KW-0678">Repressor</keyword>
<keyword id="KW-0804">Transcription</keyword>
<keyword id="KW-0805">Transcription regulation</keyword>
<keyword id="KW-0832">Ubl conjugation</keyword>
<evidence type="ECO:0000250" key="1">
    <source>
        <dbReference type="UniProtKB" id="P97360"/>
    </source>
</evidence>
<evidence type="ECO:0000255" key="2">
    <source>
        <dbReference type="PROSITE-ProRule" id="PRU00237"/>
    </source>
</evidence>
<evidence type="ECO:0000255" key="3">
    <source>
        <dbReference type="PROSITE-ProRule" id="PRU00762"/>
    </source>
</evidence>
<evidence type="ECO:0000256" key="4">
    <source>
        <dbReference type="SAM" id="MobiDB-lite"/>
    </source>
</evidence>
<evidence type="ECO:0000269" key="5">
    <source>
    </source>
</evidence>
<evidence type="ECO:0000269" key="6">
    <source>
    </source>
</evidence>
<evidence type="ECO:0000269" key="7">
    <source>
    </source>
</evidence>
<evidence type="ECO:0000269" key="8">
    <source>
    </source>
</evidence>
<evidence type="ECO:0000269" key="9">
    <source>
    </source>
</evidence>
<evidence type="ECO:0000269" key="10">
    <source>
    </source>
</evidence>
<evidence type="ECO:0000269" key="11">
    <source>
    </source>
</evidence>
<evidence type="ECO:0000269" key="12">
    <source>
    </source>
</evidence>
<evidence type="ECO:0000269" key="13">
    <source>
    </source>
</evidence>
<evidence type="ECO:0000269" key="14">
    <source>
    </source>
</evidence>
<evidence type="ECO:0000269" key="15">
    <source>
    </source>
</evidence>
<evidence type="ECO:0000269" key="16">
    <source>
    </source>
</evidence>
<evidence type="ECO:0000269" key="17">
    <source>
    </source>
</evidence>
<evidence type="ECO:0000269" key="18">
    <source>
    </source>
</evidence>
<evidence type="ECO:0000305" key="19"/>
<evidence type="ECO:0007744" key="20">
    <source>
    </source>
</evidence>
<evidence type="ECO:0007744" key="21">
    <source>
    </source>
</evidence>
<evidence type="ECO:0007744" key="22">
    <source>
    </source>
</evidence>
<evidence type="ECO:0007744" key="23">
    <source>
    </source>
</evidence>
<evidence type="ECO:0007744" key="24">
    <source>
    </source>
</evidence>
<evidence type="ECO:0007744" key="25">
    <source>
    </source>
</evidence>
<evidence type="ECO:0007744" key="26">
    <source>
    </source>
</evidence>
<evidence type="ECO:0007744" key="27">
    <source>
    </source>
</evidence>
<evidence type="ECO:0007744" key="28">
    <source>
    </source>
</evidence>
<evidence type="ECO:0007829" key="29">
    <source>
        <dbReference type="PDB" id="2DAO"/>
    </source>
</evidence>
<evidence type="ECO:0007829" key="30">
    <source>
        <dbReference type="PDB" id="5L0P"/>
    </source>
</evidence>
<evidence type="ECO:0007829" key="31">
    <source>
        <dbReference type="PDB" id="7TW9"/>
    </source>
</evidence>
<name>ETV6_HUMAN</name>
<protein>
    <recommendedName>
        <fullName>Transcription factor ETV6</fullName>
    </recommendedName>
    <alternativeName>
        <fullName>ETS translocation variant 6</fullName>
    </alternativeName>
    <alternativeName>
        <fullName>ETS-related protein Tel1</fullName>
        <shortName>Tel</shortName>
    </alternativeName>
</protein>
<comment type="function">
    <text evidence="14">Transcriptional repressor; binds to the DNA sequence 5'-CCGGAAGT-3'. Plays a role in hematopoiesis and malignant transformation.</text>
</comment>
<comment type="subunit">
    <text evidence="10 11">Can form homodimers or heterodimers with TEL2 or FLI1. Interacts with L3MBTL1 and HDAC9.</text>
</comment>
<comment type="interaction">
    <interactant intactId="EBI-1372759">
        <id>P41212</id>
    </interactant>
    <interactant intactId="EBI-541426">
        <id>Q9BXS5</id>
        <label>AP1M1</label>
    </interactant>
    <organismsDiffer>false</organismsDiffer>
    <experiments>3</experiments>
</comment>
<comment type="interaction">
    <interactant intactId="EBI-1372759">
        <id>P41212</id>
    </interactant>
    <interactant intactId="EBI-16429430">
        <id>A0A0S2Z4M1</id>
        <label>AXIN1</label>
    </interactant>
    <organismsDiffer>false</organismsDiffer>
    <experiments>3</experiments>
</comment>
<comment type="interaction">
    <interactant intactId="EBI-1372759">
        <id>P41212</id>
    </interactant>
    <interactant intactId="EBI-765476">
        <id>Q9UKV0-3</id>
        <label>HDAC9</label>
    </interactant>
    <organismsDiffer>false</organismsDiffer>
    <experiments>3</experiments>
</comment>
<comment type="interaction">
    <interactant intactId="EBI-1372759">
        <id>P41212</id>
    </interactant>
    <interactant intactId="EBI-2007911">
        <id>Q16236</id>
        <label>NFE2L2</label>
    </interactant>
    <organismsDiffer>false</organismsDiffer>
    <experiments>5</experiments>
</comment>
<comment type="interaction">
    <interactant intactId="EBI-1372759">
        <id>P41212</id>
    </interactant>
    <interactant intactId="EBI-741158">
        <id>Q96HA8</id>
        <label>NTAQ1</label>
    </interactant>
    <organismsDiffer>false</organismsDiffer>
    <experiments>3</experiments>
</comment>
<comment type="interaction">
    <interactant intactId="EBI-1372759">
        <id>P41212</id>
    </interactant>
    <interactant intactId="EBI-714158">
        <id>Q13526</id>
        <label>PIN1</label>
    </interactant>
    <organismsDiffer>false</organismsDiffer>
    <experiments>4</experiments>
</comment>
<comment type="subcellular location">
    <subcellularLocation>
        <location>Nucleus</location>
    </subcellularLocation>
</comment>
<comment type="tissue specificity">
    <text>Ubiquitous.</text>
</comment>
<comment type="PTM">
    <text evidence="9">Phosphorylation of Ser-257 by MAPK14 (p38) inhibits ETV6 transcriptional repression.</text>
</comment>
<comment type="disease">
    <text evidence="17">A chromosomal aberration involving ETV6 is found in a form of chronic myelomonocytic leukemia (CMML). Translocation t(5;12)(q33;p13) with PDGFRB. It is characterized by abnormal clonal myeloid proliferation and by progression to acute myelogenous leukemia (AML).</text>
</comment>
<comment type="disease">
    <text evidence="5 15">Chromosomal aberrations involving ETV6 are found in acute myeloid leukemia (AML). Translocation t(12;22)(p13;q11) with MN1 (PubMed:7731705). Translocation t(4;12)(q12;p13) with CHIC2 (PubMed:10477709).</text>
</comment>
<comment type="disease">
    <text evidence="16">Chromosomal aberrations involving ETV6 are found in childhood acute lymphoblastic leukemia (ALL). Translocations t(12;21)(p12;q22) and t(12;21)(p13;q22) with RUNX1/AML1.</text>
</comment>
<comment type="disease">
    <text evidence="18">A chromosomal aberration involving ETV6 is found in a form of pre-B acute lymphoid leukemia. Translocation t(9;12)(p24;p13) with JAK2.</text>
</comment>
<comment type="disease">
    <text evidence="18">A chromosomal aberration involving ETV6 and JAK2 is found in an atypical chronic myelogenous leukemia. Translocation t(9;15;12)(p24;q15;p13).</text>
</comment>
<comment type="disease">
    <text evidence="6">A chromosomal aberration involving ETV6 is found in myelodysplastic syndrome (MDS) with basophilia. Translocation t(5;12)(q31;p13) with ACSL6.</text>
</comment>
<comment type="disease">
    <text evidence="6">A chromosomal aberration involving ETV6 is found in acute eosinophilic leukemia (AEL). Translocation t(5;12)(q31;p13) with ACSL6.</text>
</comment>
<comment type="disease">
    <text evidence="8">A chromosomal aberration involving ETV6 is found in myelodysplastic syndrome (MDS). Translocation t(1;12)(p36.1;p13) with MDS2.</text>
</comment>
<comment type="disease">
    <text evidence="13">A chromosomal aberration involving ETV6 is found in acute lymphoblastic leukemia. Translocation t(9;12)(p13;p13) with PAX5.</text>
</comment>
<comment type="disease" evidence="7">
    <disease id="DI-02609">
        <name>Myeloproliferative disorder chronic with eosinophilia</name>
        <acronym>MPE</acronym>
        <description>A hematologic disorder characterized by malignant eosinophils proliferation.</description>
        <dbReference type="MIM" id="131440"/>
    </disease>
    <text evidence="7">The gene represented in this entry is involved in disease pathogenesis. A chromosomal aberration involving ETV6 is found in many instances of myeloproliferative disorder chronic with eosinophilia. Translocation t(5;12) with PDGFRB on chromosome 5 creating an ETV6-PDGFRB fusion protein.</text>
</comment>
<comment type="disease" evidence="12">
    <disease id="DI-01171">
        <name>Leukemia, acute myelogenous</name>
        <acronym>AML</acronym>
        <description>A subtype of acute leukemia, a cancer of the white blood cells. AML is a malignant disease of bone marrow characterized by maturational arrest of hematopoietic precursors at an early stage of development. Clonal expansion of myeloid blasts occurs in bone marrow, blood, and other tissue. Myelogenous leukemias develop from changes in cells that normally produce neutrophils, basophils, eosinophils and monocytes.</description>
        <dbReference type="MIM" id="601626"/>
    </disease>
    <text>The gene represented in this entry is involved in disease pathogenesis.</text>
</comment>
<comment type="disease" evidence="14">
    <disease id="DI-04335">
        <name>Thrombocytopenia 5</name>
        <acronym>THC5</acronym>
        <description>A form of thrombocytopenia, a hematologic disorder defined by a decrease in the number of platelets in circulating blood, resulting in the potential for increased bleeding and decreased ability for clotting. THC5 is an autosomal dominant disorder, associated with an increased susceptibility to the development of hematologic and solid malignancies.</description>
        <dbReference type="MIM" id="616216"/>
    </disease>
    <text>The disease is caused by variants affecting the gene represented in this entry.</text>
</comment>
<comment type="similarity">
    <text evidence="19">Belongs to the ETS family.</text>
</comment>
<comment type="sequence caution" evidence="19">
    <conflict type="erroneous initiation">
        <sequence resource="EMBL-CDS" id="ABI30005"/>
    </conflict>
    <text>Extended N-terminus.</text>
</comment>
<comment type="online information" name="Atlas of Genetics and Cytogenetics in Oncology and Haematology">
    <link uri="https://atlasgeneticsoncology.org/gene/38/ETV6"/>
</comment>
<dbReference type="EMBL" id="U11732">
    <property type="protein sequence ID" value="AAA19786.1"/>
    <property type="molecule type" value="mRNA"/>
</dbReference>
<dbReference type="EMBL" id="AK289441">
    <property type="protein sequence ID" value="BAF82130.1"/>
    <property type="molecule type" value="mRNA"/>
</dbReference>
<dbReference type="EMBL" id="CH471094">
    <property type="protein sequence ID" value="EAW96240.1"/>
    <property type="molecule type" value="Genomic_DNA"/>
</dbReference>
<dbReference type="EMBL" id="BC043399">
    <property type="protein sequence ID" value="AAH43399.1"/>
    <property type="molecule type" value="mRNA"/>
</dbReference>
<dbReference type="EMBL" id="U61375">
    <property type="protein sequence ID" value="AAC50690.1"/>
    <property type="molecule type" value="Genomic_DNA"/>
</dbReference>
<dbReference type="EMBL" id="U63312">
    <property type="protein sequence ID" value="AAB17134.1"/>
    <property type="molecule type" value="Genomic_DNA"/>
</dbReference>
<dbReference type="EMBL" id="U63313">
    <property type="protein sequence ID" value="AAB17135.1"/>
    <property type="molecule type" value="Genomic_DNA"/>
</dbReference>
<dbReference type="EMBL" id="DQ841178">
    <property type="protein sequence ID" value="ABI30005.1"/>
    <property type="status" value="ALT_INIT"/>
    <property type="molecule type" value="mRNA"/>
</dbReference>
<dbReference type="CCDS" id="CCDS8643.1"/>
<dbReference type="RefSeq" id="NP_001978.1">
    <property type="nucleotide sequence ID" value="NM_001987.5"/>
</dbReference>
<dbReference type="PDB" id="1JI7">
    <property type="method" value="X-ray"/>
    <property type="resolution" value="1.45 A"/>
    <property type="chains" value="A/B/C=47-123"/>
</dbReference>
<dbReference type="PDB" id="1LKY">
    <property type="method" value="X-ray"/>
    <property type="resolution" value="2.30 A"/>
    <property type="chains" value="A/B/C/D/E/F=47-123"/>
</dbReference>
<dbReference type="PDB" id="2DAO">
    <property type="method" value="NMR"/>
    <property type="chains" value="A=338-442"/>
</dbReference>
<dbReference type="PDB" id="2QAR">
    <property type="method" value="X-ray"/>
    <property type="resolution" value="2.40 A"/>
    <property type="chains" value="A/B/D/E=47-124"/>
</dbReference>
<dbReference type="PDB" id="2QB0">
    <property type="method" value="X-ray"/>
    <property type="resolution" value="2.56 A"/>
    <property type="chains" value="A/C=47-123"/>
</dbReference>
<dbReference type="PDB" id="2QB1">
    <property type="method" value="X-ray"/>
    <property type="resolution" value="2.61 A"/>
    <property type="chains" value="A/B=47-121"/>
</dbReference>
<dbReference type="PDB" id="5L0P">
    <property type="method" value="X-ray"/>
    <property type="resolution" value="2.30 A"/>
    <property type="chains" value="A=47-356"/>
</dbReference>
<dbReference type="PDB" id="7JU2">
    <property type="method" value="X-ray"/>
    <property type="resolution" value="1.85 A"/>
    <property type="chains" value="A/B=43-125"/>
</dbReference>
<dbReference type="PDB" id="7N1O">
    <property type="method" value="X-ray"/>
    <property type="resolution" value="2.77 A"/>
    <property type="chains" value="A=46-125"/>
</dbReference>
<dbReference type="PDB" id="7N2B">
    <property type="method" value="X-ray"/>
    <property type="resolution" value="3.22 A"/>
    <property type="chains" value="A/B=10-36, A/B=47-132"/>
</dbReference>
<dbReference type="PDB" id="7T8J">
    <property type="method" value="X-ray"/>
    <property type="resolution" value="1.89 A"/>
    <property type="chains" value="A=47-121"/>
</dbReference>
<dbReference type="PDB" id="7TDY">
    <property type="method" value="X-ray"/>
    <property type="resolution" value="1.53 A"/>
    <property type="chains" value="A=47-120"/>
</dbReference>
<dbReference type="PDB" id="7TW7">
    <property type="method" value="X-ray"/>
    <property type="resolution" value="1.62 A"/>
    <property type="chains" value="A=47-123"/>
</dbReference>
<dbReference type="PDB" id="7TW8">
    <property type="method" value="X-ray"/>
    <property type="resolution" value="1.55 A"/>
    <property type="chains" value="A=47-123"/>
</dbReference>
<dbReference type="PDB" id="7TW9">
    <property type="method" value="X-ray"/>
    <property type="resolution" value="1.41 A"/>
    <property type="chains" value="A=47-123"/>
</dbReference>
<dbReference type="PDB" id="7U4W">
    <property type="method" value="X-ray"/>
    <property type="resolution" value="2.10 A"/>
    <property type="chains" value="A=47-121"/>
</dbReference>
<dbReference type="PDB" id="7U4Z">
    <property type="method" value="X-ray"/>
    <property type="resolution" value="2.03 A"/>
    <property type="chains" value="A=47-121"/>
</dbReference>
<dbReference type="PDB" id="8BWU">
    <property type="method" value="X-ray"/>
    <property type="resolution" value="2.36 A"/>
    <property type="chains" value="A=47-123"/>
</dbReference>
<dbReference type="PDB" id="8E1F">
    <property type="method" value="X-ray"/>
    <property type="resolution" value="2.16 A"/>
    <property type="chains" value="A/B/C/D=47-124"/>
</dbReference>
<dbReference type="PDB" id="8FRJ">
    <property type="method" value="X-ray"/>
    <property type="resolution" value="1.57 A"/>
    <property type="chains" value="A=47-123"/>
</dbReference>
<dbReference type="PDB" id="8FRK">
    <property type="method" value="X-ray"/>
    <property type="resolution" value="1.61 A"/>
    <property type="chains" value="A=47-123"/>
</dbReference>
<dbReference type="PDB" id="8FT6">
    <property type="method" value="X-ray"/>
    <property type="resolution" value="2.62 A"/>
    <property type="chains" value="A=47-124"/>
</dbReference>
<dbReference type="PDB" id="8FT8">
    <property type="method" value="X-ray"/>
    <property type="resolution" value="1.60 A"/>
    <property type="chains" value="A=47-124"/>
</dbReference>
<dbReference type="PDB" id="8FZ3">
    <property type="method" value="X-ray"/>
    <property type="resolution" value="2.78 A"/>
    <property type="chains" value="A/B/C/D=47-123"/>
</dbReference>
<dbReference type="PDB" id="8FZU">
    <property type="method" value="X-ray"/>
    <property type="resolution" value="1.90 A"/>
    <property type="chains" value="A/B/C=47-111"/>
</dbReference>
<dbReference type="PDB" id="8FZV">
    <property type="method" value="X-ray"/>
    <property type="resolution" value="3.29 A"/>
    <property type="chains" value="A/B/C=47-111"/>
</dbReference>
<dbReference type="PDB" id="8THA">
    <property type="method" value="X-ray"/>
    <property type="resolution" value="1.68 A"/>
    <property type="chains" value="A=47-124"/>
</dbReference>
<dbReference type="PDB" id="9DAM">
    <property type="method" value="X-ray"/>
    <property type="resolution" value="1.78 A"/>
    <property type="chains" value="A=47-125"/>
</dbReference>
<dbReference type="PDB" id="9DB5">
    <property type="method" value="X-ray"/>
    <property type="resolution" value="1.57 A"/>
    <property type="chains" value="A=47-121"/>
</dbReference>
<dbReference type="PDB" id="9DOC">
    <property type="method" value="X-ray"/>
    <property type="resolution" value="1.19 A"/>
    <property type="chains" value="A=47-121"/>
</dbReference>
<dbReference type="PDB" id="9DP8">
    <property type="method" value="X-ray"/>
    <property type="resolution" value="3.47 A"/>
    <property type="chains" value="A=47-124"/>
</dbReference>
<dbReference type="PDB" id="9DVG">
    <property type="method" value="X-ray"/>
    <property type="resolution" value="3.54 A"/>
    <property type="chains" value="A=47-125"/>
</dbReference>
<dbReference type="PDB" id="9FEH">
    <property type="method" value="X-ray"/>
    <property type="resolution" value="1.99 A"/>
    <property type="chains" value="A=47-123"/>
</dbReference>
<dbReference type="PDBsum" id="1JI7"/>
<dbReference type="PDBsum" id="1LKY"/>
<dbReference type="PDBsum" id="2DAO"/>
<dbReference type="PDBsum" id="2QAR"/>
<dbReference type="PDBsum" id="2QB0"/>
<dbReference type="PDBsum" id="2QB1"/>
<dbReference type="PDBsum" id="5L0P"/>
<dbReference type="PDBsum" id="7JU2"/>
<dbReference type="PDBsum" id="7N1O"/>
<dbReference type="PDBsum" id="7N2B"/>
<dbReference type="PDBsum" id="7T8J"/>
<dbReference type="PDBsum" id="7TDY"/>
<dbReference type="PDBsum" id="7TW7"/>
<dbReference type="PDBsum" id="7TW8"/>
<dbReference type="PDBsum" id="7TW9"/>
<dbReference type="PDBsum" id="7U4W"/>
<dbReference type="PDBsum" id="7U4Z"/>
<dbReference type="PDBsum" id="8BWU"/>
<dbReference type="PDBsum" id="8E1F"/>
<dbReference type="PDBsum" id="8FRJ"/>
<dbReference type="PDBsum" id="8FRK"/>
<dbReference type="PDBsum" id="8FT6"/>
<dbReference type="PDBsum" id="8FT8"/>
<dbReference type="PDBsum" id="8FZ3"/>
<dbReference type="PDBsum" id="8FZU"/>
<dbReference type="PDBsum" id="8FZV"/>
<dbReference type="PDBsum" id="8THA"/>
<dbReference type="PDBsum" id="9DAM"/>
<dbReference type="PDBsum" id="9DB5"/>
<dbReference type="PDBsum" id="9DOC"/>
<dbReference type="PDBsum" id="9DP8"/>
<dbReference type="PDBsum" id="9DVG"/>
<dbReference type="PDBsum" id="9FEH"/>
<dbReference type="BMRB" id="P41212"/>
<dbReference type="SMR" id="P41212"/>
<dbReference type="BioGRID" id="108421">
    <property type="interactions" value="108"/>
</dbReference>
<dbReference type="CORUM" id="P41212"/>
<dbReference type="DIP" id="DIP-17028N"/>
<dbReference type="ELM" id="P41212"/>
<dbReference type="FunCoup" id="P41212">
    <property type="interactions" value="2403"/>
</dbReference>
<dbReference type="IntAct" id="P41212">
    <property type="interactions" value="73"/>
</dbReference>
<dbReference type="MINT" id="P41212"/>
<dbReference type="STRING" id="9606.ENSP00000379658"/>
<dbReference type="BindingDB" id="P41212"/>
<dbReference type="ChEMBL" id="CHEMBL2401606"/>
<dbReference type="DrugCentral" id="P41212"/>
<dbReference type="GlyGen" id="P41212">
    <property type="glycosylation" value="1 site, 1 O-linked glycan (1 site)"/>
</dbReference>
<dbReference type="iPTMnet" id="P41212"/>
<dbReference type="PhosphoSitePlus" id="P41212"/>
<dbReference type="BioMuta" id="ETV6"/>
<dbReference type="DMDM" id="730927"/>
<dbReference type="jPOST" id="P41212"/>
<dbReference type="MassIVE" id="P41212"/>
<dbReference type="PaxDb" id="9606-ENSP00000379658"/>
<dbReference type="PeptideAtlas" id="P41212"/>
<dbReference type="ProteomicsDB" id="55416"/>
<dbReference type="Pumba" id="P41212"/>
<dbReference type="Antibodypedia" id="634">
    <property type="antibodies" value="393 antibodies from 35 providers"/>
</dbReference>
<dbReference type="DNASU" id="2120"/>
<dbReference type="Ensembl" id="ENST00000396373.9">
    <property type="protein sequence ID" value="ENSP00000379658.3"/>
    <property type="gene ID" value="ENSG00000139083.11"/>
</dbReference>
<dbReference type="GeneID" id="2120"/>
<dbReference type="KEGG" id="hsa:2120"/>
<dbReference type="MANE-Select" id="ENST00000396373.9">
    <property type="protein sequence ID" value="ENSP00000379658.3"/>
    <property type="RefSeq nucleotide sequence ID" value="NM_001987.5"/>
    <property type="RefSeq protein sequence ID" value="NP_001978.1"/>
</dbReference>
<dbReference type="UCSC" id="uc001qzz.4">
    <property type="organism name" value="human"/>
</dbReference>
<dbReference type="AGR" id="HGNC:3495"/>
<dbReference type="CTD" id="2120"/>
<dbReference type="DisGeNET" id="2120"/>
<dbReference type="GeneCards" id="ETV6"/>
<dbReference type="GeneReviews" id="ETV6"/>
<dbReference type="HGNC" id="HGNC:3495">
    <property type="gene designation" value="ETV6"/>
</dbReference>
<dbReference type="HPA" id="ENSG00000139083">
    <property type="expression patterns" value="Low tissue specificity"/>
</dbReference>
<dbReference type="MalaCards" id="ETV6"/>
<dbReference type="MIM" id="131440">
    <property type="type" value="phenotype"/>
</dbReference>
<dbReference type="MIM" id="600618">
    <property type="type" value="gene"/>
</dbReference>
<dbReference type="MIM" id="601626">
    <property type="type" value="phenotype"/>
</dbReference>
<dbReference type="MIM" id="616216">
    <property type="type" value="phenotype"/>
</dbReference>
<dbReference type="neXtProt" id="NX_P41212"/>
<dbReference type="OpenTargets" id="ENSG00000139083"/>
<dbReference type="Orphanet" id="168629">
    <property type="disease" value="Autosomal thrombocytopenia with normal platelets"/>
</dbReference>
<dbReference type="Orphanet" id="585929">
    <property type="disease" value="B-lymphoblastic leukemia/lymphoma with t(12;21)(p13.2;q22.1)"/>
</dbReference>
<dbReference type="Orphanet" id="98823">
    <property type="disease" value="Chronic myelomonocytic leukemia"/>
</dbReference>
<dbReference type="Orphanet" id="2665">
    <property type="disease" value="Congenital mesoblastic nephroma"/>
</dbReference>
<dbReference type="Orphanet" id="146">
    <property type="disease" value="Differentiated thyroid carcinoma"/>
</dbReference>
<dbReference type="Orphanet" id="2030">
    <property type="disease" value="Fibrosarcoma"/>
</dbReference>
<dbReference type="Orphanet" id="314950">
    <property type="disease" value="Primary hypereosinophilic syndrome"/>
</dbReference>
<dbReference type="PharmGKB" id="PA27909"/>
<dbReference type="VEuPathDB" id="HostDB:ENSG00000139083"/>
<dbReference type="eggNOG" id="KOG3804">
    <property type="taxonomic scope" value="Eukaryota"/>
</dbReference>
<dbReference type="GeneTree" id="ENSGT00940000159508"/>
<dbReference type="HOGENOM" id="CLU_037998_1_0_1"/>
<dbReference type="InParanoid" id="P41212"/>
<dbReference type="OMA" id="AFMNHIM"/>
<dbReference type="OrthoDB" id="6408625at2759"/>
<dbReference type="PAN-GO" id="P41212">
    <property type="GO annotations" value="4 GO annotations based on evolutionary models"/>
</dbReference>
<dbReference type="PhylomeDB" id="P41212"/>
<dbReference type="TreeFam" id="TF318679"/>
<dbReference type="PathwayCommons" id="P41212"/>
<dbReference type="Reactome" id="R-HSA-9673768">
    <property type="pathway name" value="Signaling by membrane-tethered fusions of PDGFRA or PDGFRB"/>
</dbReference>
<dbReference type="Reactome" id="R-HSA-9703465">
    <property type="pathway name" value="Signaling by FLT3 fusion proteins"/>
</dbReference>
<dbReference type="SignaLink" id="P41212"/>
<dbReference type="SIGNOR" id="P41212"/>
<dbReference type="BioGRID-ORCS" id="2120">
    <property type="hits" value="27 hits in 1189 CRISPR screens"/>
</dbReference>
<dbReference type="ChiTaRS" id="ETV6">
    <property type="organism name" value="human"/>
</dbReference>
<dbReference type="EvolutionaryTrace" id="P41212"/>
<dbReference type="GeneWiki" id="ETV6"/>
<dbReference type="GenomeRNAi" id="2120"/>
<dbReference type="Pharos" id="P41212">
    <property type="development level" value="Tbio"/>
</dbReference>
<dbReference type="PRO" id="PR:P41212"/>
<dbReference type="Proteomes" id="UP000005640">
    <property type="component" value="Chromosome 12"/>
</dbReference>
<dbReference type="RNAct" id="P41212">
    <property type="molecule type" value="protein"/>
</dbReference>
<dbReference type="Bgee" id="ENSG00000139083">
    <property type="expression patterns" value="Expressed in mucosa of paranasal sinus and 172 other cell types or tissues"/>
</dbReference>
<dbReference type="ExpressionAtlas" id="P41212">
    <property type="expression patterns" value="baseline and differential"/>
</dbReference>
<dbReference type="GO" id="GO:0000785">
    <property type="term" value="C:chromatin"/>
    <property type="evidence" value="ECO:0000247"/>
    <property type="project" value="NTNU_SB"/>
</dbReference>
<dbReference type="GO" id="GO:0005829">
    <property type="term" value="C:cytosol"/>
    <property type="evidence" value="ECO:0000314"/>
    <property type="project" value="HPA"/>
</dbReference>
<dbReference type="GO" id="GO:0005730">
    <property type="term" value="C:nucleolus"/>
    <property type="evidence" value="ECO:0000314"/>
    <property type="project" value="HPA"/>
</dbReference>
<dbReference type="GO" id="GO:0005634">
    <property type="term" value="C:nucleus"/>
    <property type="evidence" value="ECO:0000318"/>
    <property type="project" value="GO_Central"/>
</dbReference>
<dbReference type="GO" id="GO:0005886">
    <property type="term" value="C:plasma membrane"/>
    <property type="evidence" value="ECO:0000304"/>
    <property type="project" value="Reactome"/>
</dbReference>
<dbReference type="GO" id="GO:0001228">
    <property type="term" value="F:DNA-binding transcription activator activity, RNA polymerase II-specific"/>
    <property type="evidence" value="ECO:0007669"/>
    <property type="project" value="Ensembl"/>
</dbReference>
<dbReference type="GO" id="GO:0003700">
    <property type="term" value="F:DNA-binding transcription factor activity"/>
    <property type="evidence" value="ECO:0000304"/>
    <property type="project" value="ProtInc"/>
</dbReference>
<dbReference type="GO" id="GO:0000981">
    <property type="term" value="F:DNA-binding transcription factor activity, RNA polymerase II-specific"/>
    <property type="evidence" value="ECO:0000247"/>
    <property type="project" value="NTNU_SB"/>
</dbReference>
<dbReference type="GO" id="GO:0001227">
    <property type="term" value="F:DNA-binding transcription repressor activity, RNA polymerase II-specific"/>
    <property type="evidence" value="ECO:0000314"/>
    <property type="project" value="NTNU_SB"/>
</dbReference>
<dbReference type="GO" id="GO:0019904">
    <property type="term" value="F:protein domain specific binding"/>
    <property type="evidence" value="ECO:0000353"/>
    <property type="project" value="UniProtKB"/>
</dbReference>
<dbReference type="GO" id="GO:0000978">
    <property type="term" value="F:RNA polymerase II cis-regulatory region sequence-specific DNA binding"/>
    <property type="evidence" value="ECO:0007669"/>
    <property type="project" value="Ensembl"/>
</dbReference>
<dbReference type="GO" id="GO:0000977">
    <property type="term" value="F:RNA polymerase II transcription regulatory region sequence-specific DNA binding"/>
    <property type="evidence" value="ECO:0000314"/>
    <property type="project" value="NTNU_SB"/>
</dbReference>
<dbReference type="GO" id="GO:0030154">
    <property type="term" value="P:cell differentiation"/>
    <property type="evidence" value="ECO:0000318"/>
    <property type="project" value="GO_Central"/>
</dbReference>
<dbReference type="GO" id="GO:0071425">
    <property type="term" value="P:hematopoietic stem cell proliferation"/>
    <property type="evidence" value="ECO:0000315"/>
    <property type="project" value="UniProtKB"/>
</dbReference>
<dbReference type="GO" id="GO:0097152">
    <property type="term" value="P:mesenchymal cell apoptotic process"/>
    <property type="evidence" value="ECO:0007669"/>
    <property type="project" value="Ensembl"/>
</dbReference>
<dbReference type="GO" id="GO:0000122">
    <property type="term" value="P:negative regulation of transcription by RNA polymerase II"/>
    <property type="evidence" value="ECO:0000314"/>
    <property type="project" value="NTNU_SB"/>
</dbReference>
<dbReference type="GO" id="GO:0022008">
    <property type="term" value="P:neurogenesis"/>
    <property type="evidence" value="ECO:0007669"/>
    <property type="project" value="Ensembl"/>
</dbReference>
<dbReference type="GO" id="GO:0006357">
    <property type="term" value="P:regulation of transcription by RNA polymerase II"/>
    <property type="evidence" value="ECO:0000318"/>
    <property type="project" value="GO_Central"/>
</dbReference>
<dbReference type="GO" id="GO:0007296">
    <property type="term" value="P:vitellogenesis"/>
    <property type="evidence" value="ECO:0007669"/>
    <property type="project" value="Ensembl"/>
</dbReference>
<dbReference type="CDD" id="cd08535">
    <property type="entry name" value="SAM_PNT-Tel_Yan"/>
    <property type="match status" value="1"/>
</dbReference>
<dbReference type="FunFam" id="1.10.150.50:FF:000030">
    <property type="entry name" value="transcription factor ETV6"/>
    <property type="match status" value="1"/>
</dbReference>
<dbReference type="FunFam" id="1.10.10.10:FF:000176">
    <property type="entry name" value="transcription factor ETV6 isoform X2"/>
    <property type="match status" value="1"/>
</dbReference>
<dbReference type="Gene3D" id="1.10.150.50">
    <property type="entry name" value="Transcription Factor, Ets-1"/>
    <property type="match status" value="1"/>
</dbReference>
<dbReference type="Gene3D" id="1.10.10.10">
    <property type="entry name" value="Winged helix-like DNA-binding domain superfamily/Winged helix DNA-binding domain"/>
    <property type="match status" value="1"/>
</dbReference>
<dbReference type="InterPro" id="IPR000418">
    <property type="entry name" value="Ets_dom"/>
</dbReference>
<dbReference type="InterPro" id="IPR046328">
    <property type="entry name" value="ETS_fam"/>
</dbReference>
<dbReference type="InterPro" id="IPR003118">
    <property type="entry name" value="Pointed_dom"/>
</dbReference>
<dbReference type="InterPro" id="IPR013761">
    <property type="entry name" value="SAM/pointed_sf"/>
</dbReference>
<dbReference type="InterPro" id="IPR036388">
    <property type="entry name" value="WH-like_DNA-bd_sf"/>
</dbReference>
<dbReference type="InterPro" id="IPR036390">
    <property type="entry name" value="WH_DNA-bd_sf"/>
</dbReference>
<dbReference type="PANTHER" id="PTHR11849">
    <property type="entry name" value="ETS"/>
    <property type="match status" value="1"/>
</dbReference>
<dbReference type="PANTHER" id="PTHR11849:SF19">
    <property type="entry name" value="TRANSCRIPTION FACTOR ETV6"/>
    <property type="match status" value="1"/>
</dbReference>
<dbReference type="Pfam" id="PF00178">
    <property type="entry name" value="Ets"/>
    <property type="match status" value="1"/>
</dbReference>
<dbReference type="Pfam" id="PF02198">
    <property type="entry name" value="SAM_PNT"/>
    <property type="match status" value="1"/>
</dbReference>
<dbReference type="PRINTS" id="PR00454">
    <property type="entry name" value="ETSDOMAIN"/>
</dbReference>
<dbReference type="SMART" id="SM00413">
    <property type="entry name" value="ETS"/>
    <property type="match status" value="1"/>
</dbReference>
<dbReference type="SMART" id="SM00251">
    <property type="entry name" value="SAM_PNT"/>
    <property type="match status" value="1"/>
</dbReference>
<dbReference type="SUPFAM" id="SSF47769">
    <property type="entry name" value="SAM/Pointed domain"/>
    <property type="match status" value="1"/>
</dbReference>
<dbReference type="SUPFAM" id="SSF46785">
    <property type="entry name" value="Winged helix' DNA-binding domain"/>
    <property type="match status" value="1"/>
</dbReference>
<dbReference type="PROSITE" id="PS00346">
    <property type="entry name" value="ETS_DOMAIN_2"/>
    <property type="match status" value="1"/>
</dbReference>
<dbReference type="PROSITE" id="PS50061">
    <property type="entry name" value="ETS_DOMAIN_3"/>
    <property type="match status" value="1"/>
</dbReference>
<dbReference type="PROSITE" id="PS51433">
    <property type="entry name" value="PNT"/>
    <property type="match status" value="1"/>
</dbReference>
<gene>
    <name type="primary">ETV6</name>
    <name type="synonym">TEL</name>
    <name type="synonym">TEL1</name>
</gene>
<organism>
    <name type="scientific">Homo sapiens</name>
    <name type="common">Human</name>
    <dbReference type="NCBI Taxonomy" id="9606"/>
    <lineage>
        <taxon>Eukaryota</taxon>
        <taxon>Metazoa</taxon>
        <taxon>Chordata</taxon>
        <taxon>Craniata</taxon>
        <taxon>Vertebrata</taxon>
        <taxon>Euteleostomi</taxon>
        <taxon>Mammalia</taxon>
        <taxon>Eutheria</taxon>
        <taxon>Euarchontoglires</taxon>
        <taxon>Primates</taxon>
        <taxon>Haplorrhini</taxon>
        <taxon>Catarrhini</taxon>
        <taxon>Hominidae</taxon>
        <taxon>Homo</taxon>
    </lineage>
</organism>
<accession>P41212</accession>
<accession>A3QVP6</accession>
<accession>A8K076</accession>
<accession>Q9UMF6</accession>
<accession>Q9UMF7</accession>
<accession>Q9UMG0</accession>
<sequence>MSETPAQCSIKQERISYTPPESPVPSYASSTPLHVPVPRALRMEEDSIRLPAHLRLQPIYWSRDDVAQWLKWAENEFSLRPIDSNTFEMNGKALLLLTKEDFRYRSPHSGDVLYELLQHILKQRKPRILFSPFFHPGNSIHTQPEVILHQNHEEDNCVQRTPRPSVDNVHHNPPTIELLHRSRSPITTNHRPSPDPEQRPLRSPLDNMIRRLSPAERAQGPRPHQENNHQESYPLSVSPMENNHCPASSESHPKPSSPRQESTRVIQLMPSPIMHPLILNPRHSVDFKQSRLSEDGLHREGKPINLSHREDLAYMNHIMVSVSPPEEHAMPIGRIADCRLLWDYVYQLLSDSRYENFIRWEDKESKIFRIVDPNGLARLWGNHKNRTNMTYEKMSRALRHYYKLNIIRKEPGQRLLFRFMKTPDEIMSGRTDRLEHLESQELDEQIYQEDEC</sequence>